<sequence>MTSVDCTAYGPELRALAARLPRTPRADLYAFLDAAHTAAASLPGALATALDTFNAEGSEDGHLLLRGLPVEADADLPTTPSSTPAPEDRSLLTMEAMLGLVGRRLGLHTGYRELRSGTVYHDVYPSPGAHHLSSETSETLLEFHTEMAYHRLQPNYVMLACSRADHERTAATLVASVRKALPLLDERTRARLLDRRMPCCVDVAFRGGVDDPGAIAQVKPLYGDADDPFLGYDRELLAPEDPADKEAVAALSKALDEVTEAVYLEPGDLLIVDNFRTTHARTPFSPRWDGKDRWLHRVYIRTDRNGQLSGGERAGDVVAFTPRG</sequence>
<evidence type="ECO:0000250" key="1"/>
<evidence type="ECO:0000269" key="2">
    <source>
    </source>
</evidence>
<evidence type="ECO:0000305" key="3"/>
<evidence type="ECO:0007829" key="4">
    <source>
        <dbReference type="PDB" id="1DS1"/>
    </source>
</evidence>
<evidence type="ECO:0007829" key="5">
    <source>
        <dbReference type="PDB" id="1GVG"/>
    </source>
</evidence>
<feature type="initiator methionine" description="Removed" evidence="2">
    <location>
        <position position="1"/>
    </location>
</feature>
<feature type="chain" id="PRO_0000089322" description="Clavaminate synthase 1">
    <location>
        <begin position="2"/>
        <end position="324"/>
    </location>
</feature>
<feature type="binding site">
    <location>
        <position position="144"/>
    </location>
    <ligand>
        <name>Fe cation</name>
        <dbReference type="ChEBI" id="CHEBI:24875"/>
    </ligand>
</feature>
<feature type="binding site">
    <location>
        <position position="146"/>
    </location>
    <ligand>
        <name>Fe cation</name>
        <dbReference type="ChEBI" id="CHEBI:24875"/>
    </ligand>
</feature>
<feature type="binding site">
    <location>
        <position position="279"/>
    </location>
    <ligand>
        <name>Fe cation</name>
        <dbReference type="ChEBI" id="CHEBI:24875"/>
    </ligand>
</feature>
<feature type="binding site" evidence="1">
    <location>
        <position position="293"/>
    </location>
    <ligand>
        <name>2-oxoglutarate</name>
        <dbReference type="ChEBI" id="CHEBI:16810"/>
    </ligand>
</feature>
<feature type="strand" evidence="4">
    <location>
        <begin position="3"/>
        <end position="5"/>
    </location>
</feature>
<feature type="helix" evidence="4">
    <location>
        <begin position="7"/>
        <end position="9"/>
    </location>
</feature>
<feature type="helix" evidence="4">
    <location>
        <begin position="10"/>
        <end position="18"/>
    </location>
</feature>
<feature type="helix" evidence="4">
    <location>
        <begin position="24"/>
        <end position="27"/>
    </location>
</feature>
<feature type="helix" evidence="4">
    <location>
        <begin position="28"/>
        <end position="39"/>
    </location>
</feature>
<feature type="helix" evidence="4">
    <location>
        <begin position="44"/>
        <end position="56"/>
    </location>
</feature>
<feature type="strand" evidence="4">
    <location>
        <begin position="61"/>
        <end position="67"/>
    </location>
</feature>
<feature type="helix" evidence="4">
    <location>
        <begin position="73"/>
        <end position="75"/>
    </location>
</feature>
<feature type="strand" evidence="4">
    <location>
        <begin position="82"/>
        <end position="84"/>
    </location>
</feature>
<feature type="helix" evidence="4">
    <location>
        <begin position="93"/>
        <end position="105"/>
    </location>
</feature>
<feature type="strand" evidence="4">
    <location>
        <begin position="107"/>
        <end position="111"/>
    </location>
</feature>
<feature type="helix" evidence="4">
    <location>
        <begin position="115"/>
        <end position="117"/>
    </location>
</feature>
<feature type="strand" evidence="4">
    <location>
        <begin position="119"/>
        <end position="123"/>
    </location>
</feature>
<feature type="strand" evidence="5">
    <location>
        <begin position="137"/>
        <end position="139"/>
    </location>
</feature>
<feature type="strand" evidence="4">
    <location>
        <begin position="141"/>
        <end position="144"/>
    </location>
</feature>
<feature type="turn" evidence="4">
    <location>
        <begin position="146"/>
        <end position="149"/>
    </location>
</feature>
<feature type="strand" evidence="4">
    <location>
        <begin position="155"/>
        <end position="163"/>
    </location>
</feature>
<feature type="strand" evidence="4">
    <location>
        <begin position="172"/>
        <end position="176"/>
    </location>
</feature>
<feature type="helix" evidence="4">
    <location>
        <begin position="177"/>
        <end position="180"/>
    </location>
</feature>
<feature type="helix" evidence="4">
    <location>
        <begin position="181"/>
        <end position="183"/>
    </location>
</feature>
<feature type="helix" evidence="4">
    <location>
        <begin position="186"/>
        <end position="192"/>
    </location>
</feature>
<feature type="strand" evidence="4">
    <location>
        <begin position="197"/>
        <end position="199"/>
    </location>
</feature>
<feature type="helix" evidence="4">
    <location>
        <begin position="203"/>
        <end position="205"/>
    </location>
</feature>
<feature type="helix" evidence="4">
    <location>
        <begin position="212"/>
        <end position="214"/>
    </location>
</feature>
<feature type="strand" evidence="4">
    <location>
        <begin position="215"/>
        <end position="218"/>
    </location>
</feature>
<feature type="strand" evidence="4">
    <location>
        <begin position="220"/>
        <end position="223"/>
    </location>
</feature>
<feature type="turn" evidence="4">
    <location>
        <begin position="234"/>
        <end position="236"/>
    </location>
</feature>
<feature type="helix" evidence="4">
    <location>
        <begin position="242"/>
        <end position="257"/>
    </location>
</feature>
<feature type="strand" evidence="4">
    <location>
        <begin position="260"/>
        <end position="262"/>
    </location>
</feature>
<feature type="strand" evidence="4">
    <location>
        <begin position="269"/>
        <end position="273"/>
    </location>
</feature>
<feature type="turn" evidence="4">
    <location>
        <begin position="274"/>
        <end position="276"/>
    </location>
</feature>
<feature type="strand" evidence="4">
    <location>
        <begin position="277"/>
        <end position="281"/>
    </location>
</feature>
<feature type="strand" evidence="4">
    <location>
        <begin position="294"/>
        <end position="301"/>
    </location>
</feature>
<feature type="helix" evidence="4">
    <location>
        <begin position="304"/>
        <end position="306"/>
    </location>
</feature>
<feature type="strand" evidence="4">
    <location>
        <begin position="316"/>
        <end position="318"/>
    </location>
</feature>
<dbReference type="EC" id="1.14.11.21"/>
<dbReference type="EMBL" id="L06213">
    <property type="protein sequence ID" value="AAA26722.1"/>
    <property type="molecule type" value="Genomic_DNA"/>
</dbReference>
<dbReference type="PIR" id="A44241">
    <property type="entry name" value="A44241"/>
</dbReference>
<dbReference type="RefSeq" id="WP_003961114.1">
    <property type="nucleotide sequence ID" value="NZ_CM000913.1"/>
</dbReference>
<dbReference type="PDB" id="1DRT">
    <property type="method" value="X-ray"/>
    <property type="resolution" value="2.10 A"/>
    <property type="chains" value="A=1-324"/>
</dbReference>
<dbReference type="PDB" id="1DRY">
    <property type="method" value="X-ray"/>
    <property type="resolution" value="1.40 A"/>
    <property type="chains" value="A=1-324"/>
</dbReference>
<dbReference type="PDB" id="1DS0">
    <property type="method" value="X-ray"/>
    <property type="resolution" value="1.63 A"/>
    <property type="chains" value="A=1-324"/>
</dbReference>
<dbReference type="PDB" id="1DS1">
    <property type="method" value="X-ray"/>
    <property type="resolution" value="1.08 A"/>
    <property type="chains" value="A=1-324"/>
</dbReference>
<dbReference type="PDB" id="1GVG">
    <property type="method" value="X-ray"/>
    <property type="resolution" value="1.54 A"/>
    <property type="chains" value="A=1-324"/>
</dbReference>
<dbReference type="PDBsum" id="1DRT"/>
<dbReference type="PDBsum" id="1DRY"/>
<dbReference type="PDBsum" id="1DS0"/>
<dbReference type="PDBsum" id="1DS1"/>
<dbReference type="PDBsum" id="1GVG"/>
<dbReference type="SMR" id="Q05581"/>
<dbReference type="STRING" id="1901.BB341_13950"/>
<dbReference type="DrugBank" id="DB02475">
    <property type="generic name" value="Deoxyamidinoproclavaminic acid"/>
</dbReference>
<dbReference type="DrugBank" id="DB01985">
    <property type="generic name" value="N-acetyl-L-arginine"/>
</dbReference>
<dbReference type="GeneID" id="93730537"/>
<dbReference type="KEGG" id="ag:AAA26722"/>
<dbReference type="eggNOG" id="COG2175">
    <property type="taxonomic scope" value="Bacteria"/>
</dbReference>
<dbReference type="OrthoDB" id="3872700at2"/>
<dbReference type="BRENDA" id="1.14.11.21">
    <property type="organism ID" value="5988"/>
</dbReference>
<dbReference type="UniPathway" id="UPA00112">
    <property type="reaction ID" value="UER00244"/>
</dbReference>
<dbReference type="UniPathway" id="UPA00112">
    <property type="reaction ID" value="UER00246"/>
</dbReference>
<dbReference type="UniPathway" id="UPA00112">
    <property type="reaction ID" value="UER00247"/>
</dbReference>
<dbReference type="EvolutionaryTrace" id="Q05581"/>
<dbReference type="GO" id="GO:0033758">
    <property type="term" value="F:clavaminate synthase activity"/>
    <property type="evidence" value="ECO:0007669"/>
    <property type="project" value="UniProtKB-EC"/>
</dbReference>
<dbReference type="GO" id="GO:0005506">
    <property type="term" value="F:iron ion binding"/>
    <property type="evidence" value="ECO:0007669"/>
    <property type="project" value="InterPro"/>
</dbReference>
<dbReference type="GO" id="GO:0017000">
    <property type="term" value="P:antibiotic biosynthetic process"/>
    <property type="evidence" value="ECO:0007669"/>
    <property type="project" value="UniProtKB-KW"/>
</dbReference>
<dbReference type="GO" id="GO:0033050">
    <property type="term" value="P:clavulanic acid biosynthetic process"/>
    <property type="evidence" value="ECO:0007669"/>
    <property type="project" value="UniProtKB-UniPathway"/>
</dbReference>
<dbReference type="CDD" id="cd00250">
    <property type="entry name" value="CAS_like"/>
    <property type="match status" value="1"/>
</dbReference>
<dbReference type="Gene3D" id="3.60.130.10">
    <property type="entry name" value="Clavaminate synthase-like"/>
    <property type="match status" value="1"/>
</dbReference>
<dbReference type="InterPro" id="IPR050411">
    <property type="entry name" value="AlphaKG_dependent_hydroxylases"/>
</dbReference>
<dbReference type="InterPro" id="IPR014503">
    <property type="entry name" value="Clavaminate_syn-like"/>
</dbReference>
<dbReference type="InterPro" id="IPR053503">
    <property type="entry name" value="Clavaminate_Synthase"/>
</dbReference>
<dbReference type="InterPro" id="IPR042098">
    <property type="entry name" value="TauD-like_sf"/>
</dbReference>
<dbReference type="InterPro" id="IPR003819">
    <property type="entry name" value="TauD/TfdA-like"/>
</dbReference>
<dbReference type="NCBIfam" id="NF043003">
    <property type="entry name" value="ClavSyn_CS1"/>
    <property type="match status" value="1"/>
</dbReference>
<dbReference type="PANTHER" id="PTHR10696">
    <property type="entry name" value="GAMMA-BUTYROBETAINE HYDROXYLASE-RELATED"/>
    <property type="match status" value="1"/>
</dbReference>
<dbReference type="PANTHER" id="PTHR10696:SF56">
    <property type="entry name" value="TAUD_TFDA-LIKE DOMAIN-CONTAINING PROTEIN"/>
    <property type="match status" value="1"/>
</dbReference>
<dbReference type="Pfam" id="PF02668">
    <property type="entry name" value="TauD"/>
    <property type="match status" value="1"/>
</dbReference>
<dbReference type="PIRSF" id="PIRSF019543">
    <property type="entry name" value="Clavaminate_syn"/>
    <property type="match status" value="1"/>
</dbReference>
<dbReference type="SUPFAM" id="SSF51197">
    <property type="entry name" value="Clavaminate synthase-like"/>
    <property type="match status" value="1"/>
</dbReference>
<accession>Q05581</accession>
<keyword id="KW-0002">3D-structure</keyword>
<keyword id="KW-0045">Antibiotic biosynthesis</keyword>
<keyword id="KW-0903">Direct protein sequencing</keyword>
<keyword id="KW-0408">Iron</keyword>
<keyword id="KW-0479">Metal-binding</keyword>
<keyword id="KW-0560">Oxidoreductase</keyword>
<comment type="catalytic activity">
    <reaction>
        <text>deoxyamidinoproclavaminate + 2-oxoglutarate + O2 = amidinoproclavaminate + succinate + CO2</text>
        <dbReference type="Rhea" id="RHEA:20021"/>
        <dbReference type="ChEBI" id="CHEBI:15379"/>
        <dbReference type="ChEBI" id="CHEBI:16526"/>
        <dbReference type="ChEBI" id="CHEBI:16810"/>
        <dbReference type="ChEBI" id="CHEBI:30031"/>
        <dbReference type="ChEBI" id="CHEBI:57303"/>
        <dbReference type="ChEBI" id="CHEBI:58647"/>
        <dbReference type="EC" id="1.14.11.21"/>
    </reaction>
</comment>
<comment type="catalytic activity">
    <reaction>
        <text>proclavaminate + 2-oxoglutarate + O2 = dihydroclavaminate + succinate + CO2 + H2O</text>
        <dbReference type="Rhea" id="RHEA:12773"/>
        <dbReference type="ChEBI" id="CHEBI:15377"/>
        <dbReference type="ChEBI" id="CHEBI:15379"/>
        <dbReference type="ChEBI" id="CHEBI:16526"/>
        <dbReference type="ChEBI" id="CHEBI:16810"/>
        <dbReference type="ChEBI" id="CHEBI:30031"/>
        <dbReference type="ChEBI" id="CHEBI:57301"/>
        <dbReference type="ChEBI" id="CHEBI:57302"/>
        <dbReference type="EC" id="1.14.11.21"/>
    </reaction>
</comment>
<comment type="catalytic activity">
    <reaction>
        <text>dihydroclavaminate + 2-oxoglutarate + O2 = clavaminate + succinate + CO2 + H2O</text>
        <dbReference type="Rhea" id="RHEA:19785"/>
        <dbReference type="ChEBI" id="CHEBI:15377"/>
        <dbReference type="ChEBI" id="CHEBI:15379"/>
        <dbReference type="ChEBI" id="CHEBI:16526"/>
        <dbReference type="ChEBI" id="CHEBI:16810"/>
        <dbReference type="ChEBI" id="CHEBI:30031"/>
        <dbReference type="ChEBI" id="CHEBI:57300"/>
        <dbReference type="ChEBI" id="CHEBI:57301"/>
        <dbReference type="EC" id="1.14.11.21"/>
    </reaction>
</comment>
<comment type="cofactor">
    <cofactor>
        <name>Fe(2+)</name>
        <dbReference type="ChEBI" id="CHEBI:29033"/>
    </cofactor>
    <text>Binds 1 Fe(2+) ion per subunit.</text>
</comment>
<comment type="pathway">
    <text>Antibiotic biosynthesis; clavulanate biosynthesis; clavulanate from D-glyceraldehyde 3-phosphate and L-arginine: step 3/8.</text>
</comment>
<comment type="pathway">
    <text>Antibiotic biosynthesis; clavulanate biosynthesis; clavulanate from D-glyceraldehyde 3-phosphate and L-arginine: step 5/8.</text>
</comment>
<comment type="pathway">
    <text>Antibiotic biosynthesis; clavulanate biosynthesis; clavulanate from D-glyceraldehyde 3-phosphate and L-arginine: step 6/8.</text>
</comment>
<comment type="similarity">
    <text evidence="3">Belongs to the clavaminate synthase family.</text>
</comment>
<organism>
    <name type="scientific">Streptomyces clavuligerus</name>
    <dbReference type="NCBI Taxonomy" id="1901"/>
    <lineage>
        <taxon>Bacteria</taxon>
        <taxon>Bacillati</taxon>
        <taxon>Actinomycetota</taxon>
        <taxon>Actinomycetes</taxon>
        <taxon>Kitasatosporales</taxon>
        <taxon>Streptomycetaceae</taxon>
        <taxon>Streptomyces</taxon>
    </lineage>
</organism>
<name>CAS1_STRCL</name>
<protein>
    <recommendedName>
        <fullName>Clavaminate synthase 1</fullName>
        <ecNumber>1.14.11.21</ecNumber>
    </recommendedName>
    <alternativeName>
        <fullName>Clavaminic acid synthase 1</fullName>
        <shortName>CAS1</shortName>
        <shortName>CS1</shortName>
    </alternativeName>
</protein>
<reference key="1">
    <citation type="journal article" date="1992" name="Biochemistry">
        <title>Two isozymes of clavaminate synthase central to clavulanic acid formation: cloning and sequencing of both genes from Streptomyces clavuligerus.</title>
        <authorList>
            <person name="Marsh E.N."/>
            <person name="Chang M.D.-T."/>
            <person name="Townsend C.A."/>
        </authorList>
    </citation>
    <scope>NUCLEOTIDE SEQUENCE [GENOMIC DNA]</scope>
    <scope>PROTEIN SEQUENCE OF 2-21</scope>
    <source>
        <strain>ATCC 27064 / DSM 738 / JCM 4710 / NBRC 13307 / NCIMB 12785 / NRRL 3585 / VKM Ac-602</strain>
    </source>
</reference>
<reference key="2">
    <citation type="journal article" date="1995" name="J. Biol. Chem.">
        <title>Expression and purification of two isozymes of clavaminate synthase and initial characterization of the iron binding site. General error analysis in polymerase chain reaction amplification.</title>
        <authorList>
            <person name="Busby R.W."/>
            <person name="Chang M.D.-T."/>
            <person name="Busby R.C."/>
            <person name="Wimp J."/>
            <person name="Townsend C.A."/>
        </authorList>
    </citation>
    <scope>CHARACTERIZATION</scope>
    <source>
        <strain>ATCC 27064 / DSM 738 / JCM 4710 / NBRC 13307 / NCIMB 12785 / NRRL 3585 / VKM Ac-602</strain>
    </source>
</reference>
<reference key="3">
    <citation type="journal article" date="2000" name="Nat. Struct. Biol.">
        <title>Structural origins of the selectivity of the trifunctional oxygenase clavaminic acid synthase.</title>
        <authorList>
            <person name="Zhang Z."/>
            <person name="Ren J.-S."/>
            <person name="Stammers D.K."/>
            <person name="Baldwin J.E."/>
            <person name="Harlos K."/>
            <person name="Schofield C.J."/>
        </authorList>
    </citation>
    <scope>X-RAY CRYSTALLOGRAPHY (1.08 ANGSTROMS)</scope>
    <source>
        <strain>ATCC 27064 / DSM 738 / JCM 4710 / NBRC 13307 / NCIMB 12785 / NRRL 3585 / VKM Ac-602</strain>
    </source>
</reference>
<reference key="4">
    <citation type="journal article" date="2002" name="FEBS Lett.">
        <title>Crystal structure of a clavaminate synthase-Fe(II)-2-oxoglutarate-substrate-NO complex: evidence for metal centered rearrangements.</title>
        <authorList>
            <person name="Zhang Z."/>
            <person name="Ren J.-S."/>
            <person name="Harlos K."/>
            <person name="McKinnon C.H."/>
            <person name="Clifton I.J."/>
            <person name="Schofield C.J."/>
        </authorList>
    </citation>
    <scope>X-RAY CRYSTALLOGRAPHY (1.54 ANGSTROMS)</scope>
    <source>
        <strain>ATCC 27064 / DSM 738 / JCM 4710 / NBRC 13307 / NCIMB 12785 / NRRL 3585 / VKM Ac-602</strain>
    </source>
</reference>
<proteinExistence type="evidence at protein level"/>
<gene>
    <name type="primary">cs1</name>
</gene>